<sequence length="362" mass="41167">MESTLSAQNIRRLLANETPIIDVRAPIEFNQGAMPNAINLPLMNNEERAAVGTCYKQHGSQKAVELGHQLVKGEIKAHRVAAWREACERFPSGFICCARGGMRSHIVQKWLAEIGIDYPLIEGGYKALRQATIEMTNELVQRPIILIGGCTGNGKTTLVRSLPEGIDLEGFAHHRGSSFGRTVEAQFAQATFENYLAVDMLKKSSYHSRWVLEDEGRAIGANGLPESLRIQMATAHLVVVDDPFERRMARLKEEYFDRMTHDFIEAYGEEKGWQEYSDYLHHGLYAIRRRLGAQRAAELTQLLDNALAAQKISANTEVHFSWLSPLLKEYYDPMYRYQLSKKQDKIIYTGSYEEVEQWFANH</sequence>
<proteinExistence type="inferred from homology"/>
<feature type="chain" id="PRO_1000186076" description="tRNA 2-selenouridine synthase">
    <location>
        <begin position="1"/>
        <end position="362"/>
    </location>
</feature>
<feature type="domain" description="Rhodanese" evidence="1">
    <location>
        <begin position="14"/>
        <end position="137"/>
    </location>
</feature>
<feature type="active site" description="S-selanylcysteine intermediate" evidence="1">
    <location>
        <position position="97"/>
    </location>
</feature>
<comment type="function">
    <text evidence="1">Involved in the post-transcriptional modification of the uridine at the wobble position (U34) of tRNA(Lys), tRNA(Glu) and tRNA(Gln). Catalyzes the conversion of 2-thiouridine (S2U-RNA) to 2-selenouridine (Se2U-RNA). Acts in a two-step process involving geranylation of 2-thiouridine (S2U) to S-geranyl-2-thiouridine (geS2U) and subsequent selenation of the latter derivative to 2-selenouridine (Se2U) in the tRNA chain.</text>
</comment>
<comment type="catalytic activity">
    <reaction evidence="1">
        <text>5-methylaminomethyl-2-thiouridine(34) in tRNA + selenophosphate + (2E)-geranyl diphosphate + H2O + H(+) = 5-methylaminomethyl-2-selenouridine(34) in tRNA + (2E)-thiogeraniol + phosphate + diphosphate</text>
        <dbReference type="Rhea" id="RHEA:42716"/>
        <dbReference type="Rhea" id="RHEA-COMP:10195"/>
        <dbReference type="Rhea" id="RHEA-COMP:10196"/>
        <dbReference type="ChEBI" id="CHEBI:15377"/>
        <dbReference type="ChEBI" id="CHEBI:15378"/>
        <dbReference type="ChEBI" id="CHEBI:16144"/>
        <dbReference type="ChEBI" id="CHEBI:33019"/>
        <dbReference type="ChEBI" id="CHEBI:43474"/>
        <dbReference type="ChEBI" id="CHEBI:58057"/>
        <dbReference type="ChEBI" id="CHEBI:74455"/>
        <dbReference type="ChEBI" id="CHEBI:82743"/>
        <dbReference type="ChEBI" id="CHEBI:143703"/>
        <dbReference type="EC" id="2.9.1.3"/>
    </reaction>
    <physiologicalReaction direction="left-to-right" evidence="1">
        <dbReference type="Rhea" id="RHEA:42717"/>
    </physiologicalReaction>
</comment>
<comment type="catalytic activity">
    <reaction evidence="1">
        <text>5-methylaminomethyl-2-thiouridine(34) in tRNA + (2E)-geranyl diphosphate = 5-methylaminomethyl-S-(2E)-geranyl-thiouridine(34) in tRNA + diphosphate</text>
        <dbReference type="Rhea" id="RHEA:14085"/>
        <dbReference type="Rhea" id="RHEA-COMP:10195"/>
        <dbReference type="Rhea" id="RHEA-COMP:14654"/>
        <dbReference type="ChEBI" id="CHEBI:33019"/>
        <dbReference type="ChEBI" id="CHEBI:58057"/>
        <dbReference type="ChEBI" id="CHEBI:74455"/>
        <dbReference type="ChEBI" id="CHEBI:140632"/>
    </reaction>
    <physiologicalReaction direction="left-to-right" evidence="1">
        <dbReference type="Rhea" id="RHEA:14086"/>
    </physiologicalReaction>
</comment>
<comment type="catalytic activity">
    <reaction evidence="1">
        <text>5-methylaminomethyl-S-(2E)-geranyl-thiouridine(34) in tRNA + selenophosphate + H(+) = 5-methylaminomethyl-2-(Se-phospho)selenouridine(34) in tRNA + (2E)-thiogeraniol</text>
        <dbReference type="Rhea" id="RHEA:60172"/>
        <dbReference type="Rhea" id="RHEA-COMP:14654"/>
        <dbReference type="Rhea" id="RHEA-COMP:15523"/>
        <dbReference type="ChEBI" id="CHEBI:15378"/>
        <dbReference type="ChEBI" id="CHEBI:16144"/>
        <dbReference type="ChEBI" id="CHEBI:140632"/>
        <dbReference type="ChEBI" id="CHEBI:143702"/>
        <dbReference type="ChEBI" id="CHEBI:143703"/>
    </reaction>
    <physiologicalReaction direction="left-to-right" evidence="1">
        <dbReference type="Rhea" id="RHEA:60173"/>
    </physiologicalReaction>
</comment>
<comment type="catalytic activity">
    <reaction evidence="1">
        <text>5-methylaminomethyl-2-(Se-phospho)selenouridine(34) in tRNA + H2O = 5-methylaminomethyl-2-selenouridine(34) in tRNA + phosphate</text>
        <dbReference type="Rhea" id="RHEA:60176"/>
        <dbReference type="Rhea" id="RHEA-COMP:10196"/>
        <dbReference type="Rhea" id="RHEA-COMP:15523"/>
        <dbReference type="ChEBI" id="CHEBI:15377"/>
        <dbReference type="ChEBI" id="CHEBI:43474"/>
        <dbReference type="ChEBI" id="CHEBI:82743"/>
        <dbReference type="ChEBI" id="CHEBI:143702"/>
    </reaction>
    <physiologicalReaction direction="left-to-right" evidence="1">
        <dbReference type="Rhea" id="RHEA:60177"/>
    </physiologicalReaction>
</comment>
<comment type="subunit">
    <text evidence="1">Monomer.</text>
</comment>
<comment type="similarity">
    <text evidence="1">Belongs to the SelU family.</text>
</comment>
<protein>
    <recommendedName>
        <fullName evidence="1">tRNA 2-selenouridine synthase</fullName>
        <ecNumber evidence="1">2.9.1.3</ecNumber>
    </recommendedName>
</protein>
<keyword id="KW-1185">Reference proteome</keyword>
<keyword id="KW-0711">Selenium</keyword>
<keyword id="KW-0808">Transferase</keyword>
<evidence type="ECO:0000255" key="1">
    <source>
        <dbReference type="HAMAP-Rule" id="MF_01622"/>
    </source>
</evidence>
<reference key="1">
    <citation type="journal article" date="2008" name="J. Bacteriol.">
        <title>Complete genome sequence of uropathogenic Proteus mirabilis, a master of both adherence and motility.</title>
        <authorList>
            <person name="Pearson M.M."/>
            <person name="Sebaihia M."/>
            <person name="Churcher C."/>
            <person name="Quail M.A."/>
            <person name="Seshasayee A.S."/>
            <person name="Luscombe N.M."/>
            <person name="Abdellah Z."/>
            <person name="Arrosmith C."/>
            <person name="Atkin B."/>
            <person name="Chillingworth T."/>
            <person name="Hauser H."/>
            <person name="Jagels K."/>
            <person name="Moule S."/>
            <person name="Mungall K."/>
            <person name="Norbertczak H."/>
            <person name="Rabbinowitsch E."/>
            <person name="Walker D."/>
            <person name="Whithead S."/>
            <person name="Thomson N.R."/>
            <person name="Rather P.N."/>
            <person name="Parkhill J."/>
            <person name="Mobley H.L.T."/>
        </authorList>
    </citation>
    <scope>NUCLEOTIDE SEQUENCE [LARGE SCALE GENOMIC DNA]</scope>
    <source>
        <strain>HI4320</strain>
    </source>
</reference>
<dbReference type="EC" id="2.9.1.3" evidence="1"/>
<dbReference type="EMBL" id="AM942759">
    <property type="protein sequence ID" value="CAR42684.1"/>
    <property type="molecule type" value="Genomic_DNA"/>
</dbReference>
<dbReference type="RefSeq" id="WP_012367929.1">
    <property type="nucleotide sequence ID" value="NC_010554.1"/>
</dbReference>
<dbReference type="SMR" id="B4F2U3"/>
<dbReference type="EnsemblBacteria" id="CAR42684">
    <property type="protein sequence ID" value="CAR42684"/>
    <property type="gene ID" value="PMI1262"/>
</dbReference>
<dbReference type="GeneID" id="6800140"/>
<dbReference type="KEGG" id="pmr:PMI1262"/>
<dbReference type="PATRIC" id="fig|529507.6.peg.1215"/>
<dbReference type="eggNOG" id="COG2603">
    <property type="taxonomic scope" value="Bacteria"/>
</dbReference>
<dbReference type="HOGENOM" id="CLU_043456_1_0_6"/>
<dbReference type="Proteomes" id="UP000008319">
    <property type="component" value="Chromosome"/>
</dbReference>
<dbReference type="GO" id="GO:0016765">
    <property type="term" value="F:transferase activity, transferring alkyl or aryl (other than methyl) groups"/>
    <property type="evidence" value="ECO:0007669"/>
    <property type="project" value="UniProtKB-UniRule"/>
</dbReference>
<dbReference type="GO" id="GO:0043828">
    <property type="term" value="F:tRNA 2-selenouridine synthase activity"/>
    <property type="evidence" value="ECO:0007669"/>
    <property type="project" value="UniProtKB-EC"/>
</dbReference>
<dbReference type="GO" id="GO:0002098">
    <property type="term" value="P:tRNA wobble uridine modification"/>
    <property type="evidence" value="ECO:0007669"/>
    <property type="project" value="UniProtKB-UniRule"/>
</dbReference>
<dbReference type="CDD" id="cd01520">
    <property type="entry name" value="RHOD_YbbB"/>
    <property type="match status" value="1"/>
</dbReference>
<dbReference type="Gene3D" id="3.40.250.10">
    <property type="entry name" value="Rhodanese-like domain"/>
    <property type="match status" value="1"/>
</dbReference>
<dbReference type="HAMAP" id="MF_01622">
    <property type="entry name" value="tRNA_sel_U_synth"/>
    <property type="match status" value="1"/>
</dbReference>
<dbReference type="InterPro" id="IPR027417">
    <property type="entry name" value="P-loop_NTPase"/>
</dbReference>
<dbReference type="InterPro" id="IPR001763">
    <property type="entry name" value="Rhodanese-like_dom"/>
</dbReference>
<dbReference type="InterPro" id="IPR036873">
    <property type="entry name" value="Rhodanese-like_dom_sf"/>
</dbReference>
<dbReference type="InterPro" id="IPR017582">
    <property type="entry name" value="SelU"/>
</dbReference>
<dbReference type="NCBIfam" id="NF008749">
    <property type="entry name" value="PRK11784.1-1"/>
    <property type="match status" value="1"/>
</dbReference>
<dbReference type="NCBIfam" id="NF008750">
    <property type="entry name" value="PRK11784.1-2"/>
    <property type="match status" value="1"/>
</dbReference>
<dbReference type="NCBIfam" id="NF008751">
    <property type="entry name" value="PRK11784.1-3"/>
    <property type="match status" value="1"/>
</dbReference>
<dbReference type="NCBIfam" id="TIGR03167">
    <property type="entry name" value="tRNA_sel_U_synt"/>
    <property type="match status" value="1"/>
</dbReference>
<dbReference type="PANTHER" id="PTHR30401">
    <property type="entry name" value="TRNA 2-SELENOURIDINE SYNTHASE"/>
    <property type="match status" value="1"/>
</dbReference>
<dbReference type="PANTHER" id="PTHR30401:SF0">
    <property type="entry name" value="TRNA 2-SELENOURIDINE SYNTHASE"/>
    <property type="match status" value="1"/>
</dbReference>
<dbReference type="SMART" id="SM00450">
    <property type="entry name" value="RHOD"/>
    <property type="match status" value="1"/>
</dbReference>
<dbReference type="SUPFAM" id="SSF52540">
    <property type="entry name" value="P-loop containing nucleoside triphosphate hydrolases"/>
    <property type="match status" value="1"/>
</dbReference>
<dbReference type="SUPFAM" id="SSF52821">
    <property type="entry name" value="Rhodanese/Cell cycle control phosphatase"/>
    <property type="match status" value="1"/>
</dbReference>
<dbReference type="PROSITE" id="PS50206">
    <property type="entry name" value="RHODANESE_3"/>
    <property type="match status" value="1"/>
</dbReference>
<organism>
    <name type="scientific">Proteus mirabilis (strain HI4320)</name>
    <dbReference type="NCBI Taxonomy" id="529507"/>
    <lineage>
        <taxon>Bacteria</taxon>
        <taxon>Pseudomonadati</taxon>
        <taxon>Pseudomonadota</taxon>
        <taxon>Gammaproteobacteria</taxon>
        <taxon>Enterobacterales</taxon>
        <taxon>Morganellaceae</taxon>
        <taxon>Proteus</taxon>
    </lineage>
</organism>
<gene>
    <name evidence="1" type="primary">selU</name>
    <name type="ordered locus">PMI1262</name>
</gene>
<name>SELU_PROMH</name>
<accession>B4F2U3</accession>